<protein>
    <recommendedName>
        <fullName>Hemagglutinin-esterase</fullName>
        <shortName>HE protein</shortName>
        <ecNumber>3.1.1.53</ecNumber>
    </recommendedName>
    <alternativeName>
        <fullName>E3 glycoprotein</fullName>
    </alternativeName>
</protein>
<feature type="signal peptide" evidence="2">
    <location>
        <begin position="1"/>
        <end position="27"/>
    </location>
</feature>
<feature type="chain" id="PRO_0000045401" description="Hemagglutinin-esterase">
    <location>
        <begin position="28"/>
        <end position="430"/>
    </location>
</feature>
<feature type="topological domain" description="Virion surface" evidence="2">
    <location>
        <begin position="28"/>
        <end position="404"/>
    </location>
</feature>
<feature type="transmembrane region" description="Helical" evidence="2">
    <location>
        <begin position="405"/>
        <end position="425"/>
    </location>
</feature>
<feature type="topological domain" description="Intravirion" evidence="2">
    <location>
        <begin position="426"/>
        <end position="430"/>
    </location>
</feature>
<feature type="region of interest" description="Esterase domain first part" evidence="1">
    <location>
        <begin position="16"/>
        <end position="133"/>
    </location>
</feature>
<feature type="region of interest" description="Receptor binding" evidence="1">
    <location>
        <begin position="134"/>
        <end position="274"/>
    </location>
</feature>
<feature type="region of interest" description="Esterase domain second part" evidence="1">
    <location>
        <begin position="275"/>
        <end position="390"/>
    </location>
</feature>
<feature type="active site" description="Nucleophile" evidence="1">
    <location>
        <position position="49"/>
    </location>
</feature>
<feature type="active site" description="Charge relay system" evidence="1">
    <location>
        <position position="336"/>
    </location>
</feature>
<feature type="active site" description="Charge relay system" evidence="1">
    <location>
        <position position="339"/>
    </location>
</feature>
<feature type="glycosylation site" description="N-linked (GlcNAc...) asparagine; by host" evidence="2">
    <location>
        <position position="88"/>
    </location>
</feature>
<feature type="glycosylation site" description="N-linked (GlcNAc...) asparagine; by host" evidence="2">
    <location>
        <position position="117"/>
    </location>
</feature>
<feature type="glycosylation site" description="N-linked (GlcNAc...) asparagine; by host" evidence="2">
    <location>
        <position position="159"/>
    </location>
</feature>
<feature type="glycosylation site" description="N-linked (GlcNAc...) asparagine; by host" evidence="2">
    <location>
        <position position="165"/>
    </location>
</feature>
<feature type="glycosylation site" description="N-linked (GlcNAc...) asparagine; by host" evidence="2">
    <location>
        <position position="247"/>
    </location>
</feature>
<feature type="glycosylation site" description="N-linked (GlcNAc...) asparagine; by host" evidence="2">
    <location>
        <position position="268"/>
    </location>
</feature>
<feature type="glycosylation site" description="N-linked (GlcNAc...) asparagine; by host" evidence="2">
    <location>
        <position position="289"/>
    </location>
</feature>
<feature type="glycosylation site" description="N-linked (GlcNAc...) asparagine; by host" evidence="2">
    <location>
        <position position="324"/>
    </location>
</feature>
<feature type="glycosylation site" description="N-linked (GlcNAc...) asparagine; by host" evidence="2">
    <location>
        <position position="354"/>
    </location>
</feature>
<feature type="disulfide bond" evidence="1">
    <location>
        <begin position="53"/>
        <end position="69"/>
    </location>
</feature>
<feature type="disulfide bond" evidence="1">
    <location>
        <begin position="120"/>
        <end position="168"/>
    </location>
</feature>
<feature type="disulfide bond" evidence="1">
    <location>
        <begin position="207"/>
        <end position="284"/>
    </location>
</feature>
<feature type="disulfide bond" evidence="1">
    <location>
        <begin position="215"/>
        <end position="257"/>
    </location>
</feature>
<feature type="disulfide bond" evidence="1">
    <location>
        <begin position="315"/>
        <end position="320"/>
    </location>
</feature>
<feature type="disulfide bond" evidence="1">
    <location>
        <begin position="357"/>
        <end position="382"/>
    </location>
</feature>
<proteinExistence type="evidence at protein level"/>
<evidence type="ECO:0000250" key="1"/>
<evidence type="ECO:0000255" key="2"/>
<evidence type="ECO:0000305" key="3"/>
<accession>Q70KP1</accession>
<organism>
    <name type="scientific">Porcine torovirus (strain P10)</name>
    <name type="common">PoTV</name>
    <dbReference type="NCBI Taxonomy" id="360395"/>
    <lineage>
        <taxon>Viruses</taxon>
        <taxon>Riboviria</taxon>
        <taxon>Orthornavirae</taxon>
        <taxon>Pisuviricota</taxon>
        <taxon>Pisoniviricetes</taxon>
        <taxon>Nidovirales</taxon>
        <taxon>Tornidovirineae</taxon>
        <taxon>Tobaniviridae</taxon>
        <taxon>Torovirinae</taxon>
        <taxon>Torovirus</taxon>
        <taxon>Renitovirus</taxon>
        <taxon>Porcine torovirus</taxon>
    </lineage>
</organism>
<dbReference type="EC" id="3.1.1.53"/>
<dbReference type="EMBL" id="AJ575366">
    <property type="protein sequence ID" value="CAE01332.1"/>
    <property type="molecule type" value="Genomic_RNA"/>
</dbReference>
<dbReference type="SMR" id="Q70KP1"/>
<dbReference type="GlyCosmos" id="Q70KP1">
    <property type="glycosylation" value="9 sites, No reported glycans"/>
</dbReference>
<dbReference type="GO" id="GO:0020002">
    <property type="term" value="C:host cell plasma membrane"/>
    <property type="evidence" value="ECO:0007669"/>
    <property type="project" value="UniProtKB-SubCell"/>
</dbReference>
<dbReference type="GO" id="GO:0016020">
    <property type="term" value="C:membrane"/>
    <property type="evidence" value="ECO:0007669"/>
    <property type="project" value="UniProtKB-KW"/>
</dbReference>
<dbReference type="GO" id="GO:0019031">
    <property type="term" value="C:viral envelope"/>
    <property type="evidence" value="ECO:0007669"/>
    <property type="project" value="UniProtKB-KW"/>
</dbReference>
<dbReference type="GO" id="GO:0055036">
    <property type="term" value="C:virion membrane"/>
    <property type="evidence" value="ECO:0007669"/>
    <property type="project" value="UniProtKB-SubCell"/>
</dbReference>
<dbReference type="GO" id="GO:0046789">
    <property type="term" value="F:host cell surface receptor binding"/>
    <property type="evidence" value="ECO:0007669"/>
    <property type="project" value="InterPro"/>
</dbReference>
<dbReference type="GO" id="GO:0016788">
    <property type="term" value="F:hydrolase activity, acting on ester bonds"/>
    <property type="evidence" value="ECO:0000314"/>
    <property type="project" value="CACAO"/>
</dbReference>
<dbReference type="GO" id="GO:0106331">
    <property type="term" value="F:sialate 4-O-acetylesterase activity"/>
    <property type="evidence" value="ECO:0007669"/>
    <property type="project" value="RHEA"/>
</dbReference>
<dbReference type="GO" id="GO:0106330">
    <property type="term" value="F:sialate 9-O-acetylesterase activity"/>
    <property type="evidence" value="ECO:0007669"/>
    <property type="project" value="RHEA"/>
</dbReference>
<dbReference type="GO" id="GO:0019064">
    <property type="term" value="P:fusion of virus membrane with host plasma membrane"/>
    <property type="evidence" value="ECO:0007669"/>
    <property type="project" value="InterPro"/>
</dbReference>
<dbReference type="InterPro" id="IPR008980">
    <property type="entry name" value="Capsid_hemagglutn"/>
</dbReference>
<dbReference type="InterPro" id="IPR007142">
    <property type="entry name" value="Hemagglutn-estrase_core"/>
</dbReference>
<dbReference type="InterPro" id="IPR003860">
    <property type="entry name" value="Hemagglutn-estrase_hemagglutn"/>
</dbReference>
<dbReference type="Pfam" id="PF03996">
    <property type="entry name" value="Hema_esterase"/>
    <property type="match status" value="1"/>
</dbReference>
<dbReference type="Pfam" id="PF02710">
    <property type="entry name" value="Hema_HEFG"/>
    <property type="match status" value="1"/>
</dbReference>
<dbReference type="SUPFAM" id="SSF52266">
    <property type="entry name" value="SGNH hydrolase"/>
    <property type="match status" value="1"/>
</dbReference>
<dbReference type="SUPFAM" id="SSF49818">
    <property type="entry name" value="Viral protein domain"/>
    <property type="match status" value="1"/>
</dbReference>
<comment type="function">
    <text>Structural protein that makes short spikes at the surface of the virus. Contains receptor binding and receptor-destroying activities. Mediates de-O-acetylation of N-acetyl-9-O-acetylneuraminic acid, which is probably the receptor determinant recognized by the virus on the surface of erythrocytes and susceptible cells. This receptor-destroying activity is important for virus release as it probably helps preventing self-aggregation and ensures the efficient spread of the progeny virus from cell to cell. May serve as a secondary viral attachment protein for initiating infection, the spike protein being the major one. Seems to be a 'luxury' protein that is not absolutely necessary for virus infection in culture. However, its presence in the virus may alter its pathogenicity. May become a target for both the humoral and the cellular branches of the immune system.</text>
</comment>
<comment type="catalytic activity">
    <reaction>
        <text>N-acetyl-9-O-acetylneuraminate + H2O = N-acetylneuraminate + acetate + H(+)</text>
        <dbReference type="Rhea" id="RHEA:22600"/>
        <dbReference type="ChEBI" id="CHEBI:15377"/>
        <dbReference type="ChEBI" id="CHEBI:15378"/>
        <dbReference type="ChEBI" id="CHEBI:28999"/>
        <dbReference type="ChEBI" id="CHEBI:30089"/>
        <dbReference type="ChEBI" id="CHEBI:35418"/>
        <dbReference type="EC" id="3.1.1.53"/>
    </reaction>
</comment>
<comment type="catalytic activity">
    <reaction>
        <text>N-acetyl-4-O-acetylneuraminate + H2O = N-acetylneuraminate + acetate + H(+)</text>
        <dbReference type="Rhea" id="RHEA:25564"/>
        <dbReference type="ChEBI" id="CHEBI:15377"/>
        <dbReference type="ChEBI" id="CHEBI:15378"/>
        <dbReference type="ChEBI" id="CHEBI:29006"/>
        <dbReference type="ChEBI" id="CHEBI:30089"/>
        <dbReference type="ChEBI" id="CHEBI:35418"/>
        <dbReference type="EC" id="3.1.1.53"/>
    </reaction>
</comment>
<comment type="subcellular location">
    <subcellularLocation>
        <location evidence="3">Virion membrane</location>
        <topology evidence="3">Single-pass type I membrane protein</topology>
    </subcellularLocation>
    <subcellularLocation>
        <location evidence="3">Host cell membrane</location>
        <topology evidence="3">Single-pass type I membrane protein</topology>
    </subcellularLocation>
    <text evidence="1">In infected cells becomes incorporated into the envelope of virions during virus assembly at the endoplasmic reticulum and cis Golgi. However, some may escape incorporation into virions and subsequently migrate to the cell surface (By similarity).</text>
</comment>
<comment type="PTM">
    <text evidence="1">N-glycosylated.</text>
</comment>
<comment type="similarity">
    <text evidence="3">Belongs to the influenza type C/coronaviruses hemagglutinin-esterase family.</text>
</comment>
<reference key="1">
    <citation type="journal article" date="2003" name="J. Virol.">
        <title>Phylogenetic and evolutionary relationships among torovirus field variants: evidence for multiple intertypic recombination events.</title>
        <authorList>
            <person name="Smits S.L."/>
            <person name="Lavazza A."/>
            <person name="Matiz K."/>
            <person name="Horzinek M.C."/>
            <person name="Koopmans M.P."/>
            <person name="de Groot R.J."/>
        </authorList>
    </citation>
    <scope>NUCLEOTIDE SEQUENCE [GENOMIC RNA]</scope>
</reference>
<reference key="2">
    <citation type="journal article" date="2005" name="J. Biol. Chem.">
        <title>Nidovirus sialate-O-acetylesterases: evolution and substrate specificity of coronaviral and toroviral receptor-destroying enzymes.</title>
        <authorList>
            <person name="Smits S.L."/>
            <person name="Gerwig G.J."/>
            <person name="van Vliet A.L."/>
            <person name="Lissenberg A."/>
            <person name="Briza P."/>
            <person name="Kamerling J.P."/>
            <person name="Vlasak R."/>
            <person name="de Groot R.J."/>
        </authorList>
    </citation>
    <scope>CHARACTERIZATION</scope>
</reference>
<keyword id="KW-1015">Disulfide bond</keyword>
<keyword id="KW-0325">Glycoprotein</keyword>
<keyword id="KW-0348">Hemagglutinin</keyword>
<keyword id="KW-1032">Host cell membrane</keyword>
<keyword id="KW-1043">Host membrane</keyword>
<keyword id="KW-0378">Hydrolase</keyword>
<keyword id="KW-0472">Membrane</keyword>
<keyword id="KW-0732">Signal</keyword>
<keyword id="KW-0812">Transmembrane</keyword>
<keyword id="KW-1133">Transmembrane helix</keyword>
<keyword id="KW-0261">Viral envelope protein</keyword>
<keyword id="KW-0946">Virion</keyword>
<gene>
    <name type="primary">HE</name>
</gene>
<name>HEMA_PTV10</name>
<sequence length="430" mass="48225">MLRMRVRPPSAIPVFLIFVLLPFVLTSKPITPHYGPGHITSDWCGFGDSRSDCGNQHTPKSLDIPQELCPKFSSRTGSSMFISMHWNNDSDFNAFGYSNCGVEKVFYEGVNFSPYRNYTCYQEGSFGWVSNKVGFYSKLYSMASTSRCIKLINLDPPTNFTNYRNGTCTGNGGTAKMPDNPQLVIFNSVVKVSTQFVLPSSSDGFSCTKHLVPFCYIDGGCFEMSGVCYPFGYYYQSPSFYHAFYTNGTAGLHRYICDYLEMKPGVYNATTFGKFLIYPTKSYCMDTMNYTVPVQAVQSIWSENRQSDDAIGQACKSPYCIFYNKTKPYLAPNGADENHGDEEVRQMMQGLLVNSSCVSPQGSTPLALYSSEMIYTPNYGSCPQYYKLFETSSDENVDVTSSAYFVATWVLLVLVIILIFILISFCLSSY</sequence>
<organismHost>
    <name type="scientific">Sus scrofa</name>
    <name type="common">Pig</name>
    <dbReference type="NCBI Taxonomy" id="9823"/>
</organismHost>